<keyword id="KW-0963">Cytoplasm</keyword>
<keyword id="KW-0378">Hydrolase</keyword>
<keyword id="KW-0546">Nucleotide metabolism</keyword>
<organism>
    <name type="scientific">Pseudomonas syringae pv. syringae (strain B728a)</name>
    <dbReference type="NCBI Taxonomy" id="205918"/>
    <lineage>
        <taxon>Bacteria</taxon>
        <taxon>Pseudomonadati</taxon>
        <taxon>Pseudomonadota</taxon>
        <taxon>Gammaproteobacteria</taxon>
        <taxon>Pseudomonadales</taxon>
        <taxon>Pseudomonadaceae</taxon>
        <taxon>Pseudomonas</taxon>
        <taxon>Pseudomonas syringae</taxon>
    </lineage>
</organism>
<feature type="chain" id="PRO_0000267384" description="dTTP/UTP pyrophosphatase">
    <location>
        <begin position="1"/>
        <end position="200"/>
    </location>
</feature>
<feature type="active site" description="Proton acceptor" evidence="1">
    <location>
        <position position="72"/>
    </location>
</feature>
<feature type="site" description="Important for substrate specificity" evidence="1">
    <location>
        <position position="12"/>
    </location>
</feature>
<feature type="site" description="Important for substrate specificity" evidence="1">
    <location>
        <position position="73"/>
    </location>
</feature>
<feature type="site" description="Important for substrate specificity" evidence="1">
    <location>
        <position position="155"/>
    </location>
</feature>
<reference key="1">
    <citation type="journal article" date="2005" name="Proc. Natl. Acad. Sci. U.S.A.">
        <title>Comparison of the complete genome sequences of Pseudomonas syringae pv. syringae B728a and pv. tomato DC3000.</title>
        <authorList>
            <person name="Feil H."/>
            <person name="Feil W.S."/>
            <person name="Chain P."/>
            <person name="Larimer F."/>
            <person name="Dibartolo G."/>
            <person name="Copeland A."/>
            <person name="Lykidis A."/>
            <person name="Trong S."/>
            <person name="Nolan M."/>
            <person name="Goltsman E."/>
            <person name="Thiel J."/>
            <person name="Malfatti S."/>
            <person name="Loper J.E."/>
            <person name="Lapidus A."/>
            <person name="Detter J.C."/>
            <person name="Land M."/>
            <person name="Richardson P.M."/>
            <person name="Kyrpides N.C."/>
            <person name="Ivanova N."/>
            <person name="Lindow S.E."/>
        </authorList>
    </citation>
    <scope>NUCLEOTIDE SEQUENCE [LARGE SCALE GENOMIC DNA]</scope>
    <source>
        <strain>B728a</strain>
    </source>
</reference>
<accession>Q4ZNT2</accession>
<name>NTPPA_PSEU2</name>
<proteinExistence type="inferred from homology"/>
<dbReference type="EC" id="3.6.1.9" evidence="1"/>
<dbReference type="EMBL" id="CP000075">
    <property type="protein sequence ID" value="AAY39190.1"/>
    <property type="molecule type" value="Genomic_DNA"/>
</dbReference>
<dbReference type="RefSeq" id="WP_011268868.1">
    <property type="nucleotide sequence ID" value="NC_007005.1"/>
</dbReference>
<dbReference type="RefSeq" id="YP_237228.1">
    <property type="nucleotide sequence ID" value="NC_007005.1"/>
</dbReference>
<dbReference type="SMR" id="Q4ZNT2"/>
<dbReference type="STRING" id="205918.Psyr_4160"/>
<dbReference type="KEGG" id="psb:Psyr_4160"/>
<dbReference type="PATRIC" id="fig|205918.7.peg.4286"/>
<dbReference type="eggNOG" id="COG0424">
    <property type="taxonomic scope" value="Bacteria"/>
</dbReference>
<dbReference type="HOGENOM" id="CLU_040416_2_1_6"/>
<dbReference type="OrthoDB" id="9807767at2"/>
<dbReference type="Proteomes" id="UP000000426">
    <property type="component" value="Chromosome"/>
</dbReference>
<dbReference type="GO" id="GO:0005737">
    <property type="term" value="C:cytoplasm"/>
    <property type="evidence" value="ECO:0007669"/>
    <property type="project" value="UniProtKB-SubCell"/>
</dbReference>
<dbReference type="GO" id="GO:0036218">
    <property type="term" value="F:dTTP diphosphatase activity"/>
    <property type="evidence" value="ECO:0007669"/>
    <property type="project" value="RHEA"/>
</dbReference>
<dbReference type="GO" id="GO:0036221">
    <property type="term" value="F:UTP diphosphatase activity"/>
    <property type="evidence" value="ECO:0007669"/>
    <property type="project" value="RHEA"/>
</dbReference>
<dbReference type="GO" id="GO:0009117">
    <property type="term" value="P:nucleotide metabolic process"/>
    <property type="evidence" value="ECO:0007669"/>
    <property type="project" value="UniProtKB-KW"/>
</dbReference>
<dbReference type="CDD" id="cd00555">
    <property type="entry name" value="Maf"/>
    <property type="match status" value="1"/>
</dbReference>
<dbReference type="Gene3D" id="3.90.950.10">
    <property type="match status" value="1"/>
</dbReference>
<dbReference type="HAMAP" id="MF_00528">
    <property type="entry name" value="Maf"/>
    <property type="match status" value="1"/>
</dbReference>
<dbReference type="InterPro" id="IPR029001">
    <property type="entry name" value="ITPase-like_fam"/>
</dbReference>
<dbReference type="InterPro" id="IPR003697">
    <property type="entry name" value="Maf-like"/>
</dbReference>
<dbReference type="NCBIfam" id="TIGR00172">
    <property type="entry name" value="maf"/>
    <property type="match status" value="1"/>
</dbReference>
<dbReference type="PANTHER" id="PTHR43213">
    <property type="entry name" value="BIFUNCTIONAL DTTP/UTP PYROPHOSPHATASE/METHYLTRANSFERASE PROTEIN-RELATED"/>
    <property type="match status" value="1"/>
</dbReference>
<dbReference type="PANTHER" id="PTHR43213:SF5">
    <property type="entry name" value="BIFUNCTIONAL DTTP_UTP PYROPHOSPHATASE_METHYLTRANSFERASE PROTEIN-RELATED"/>
    <property type="match status" value="1"/>
</dbReference>
<dbReference type="Pfam" id="PF02545">
    <property type="entry name" value="Maf"/>
    <property type="match status" value="1"/>
</dbReference>
<dbReference type="PIRSF" id="PIRSF006305">
    <property type="entry name" value="Maf"/>
    <property type="match status" value="1"/>
</dbReference>
<dbReference type="SUPFAM" id="SSF52972">
    <property type="entry name" value="ITPase-like"/>
    <property type="match status" value="1"/>
</dbReference>
<evidence type="ECO:0000255" key="1">
    <source>
        <dbReference type="HAMAP-Rule" id="MF_00528"/>
    </source>
</evidence>
<comment type="function">
    <text evidence="1">Nucleoside triphosphate pyrophosphatase that hydrolyzes dTTP and UTP. May have a dual role in cell division arrest and in preventing the incorporation of modified nucleotides into cellular nucleic acids.</text>
</comment>
<comment type="catalytic activity">
    <reaction evidence="1">
        <text>dTTP + H2O = dTMP + diphosphate + H(+)</text>
        <dbReference type="Rhea" id="RHEA:28534"/>
        <dbReference type="ChEBI" id="CHEBI:15377"/>
        <dbReference type="ChEBI" id="CHEBI:15378"/>
        <dbReference type="ChEBI" id="CHEBI:33019"/>
        <dbReference type="ChEBI" id="CHEBI:37568"/>
        <dbReference type="ChEBI" id="CHEBI:63528"/>
        <dbReference type="EC" id="3.6.1.9"/>
    </reaction>
</comment>
<comment type="catalytic activity">
    <reaction evidence="1">
        <text>UTP + H2O = UMP + diphosphate + H(+)</text>
        <dbReference type="Rhea" id="RHEA:29395"/>
        <dbReference type="ChEBI" id="CHEBI:15377"/>
        <dbReference type="ChEBI" id="CHEBI:15378"/>
        <dbReference type="ChEBI" id="CHEBI:33019"/>
        <dbReference type="ChEBI" id="CHEBI:46398"/>
        <dbReference type="ChEBI" id="CHEBI:57865"/>
        <dbReference type="EC" id="3.6.1.9"/>
    </reaction>
</comment>
<comment type="cofactor">
    <cofactor evidence="1">
        <name>a divalent metal cation</name>
        <dbReference type="ChEBI" id="CHEBI:60240"/>
    </cofactor>
</comment>
<comment type="subcellular location">
    <subcellularLocation>
        <location evidence="1">Cytoplasm</location>
    </subcellularLocation>
</comment>
<comment type="similarity">
    <text evidence="1">Belongs to the Maf family. YhdE subfamily.</text>
</comment>
<gene>
    <name type="ordered locus">Psyr_4160</name>
</gene>
<sequence>MPSLYLASGSPRRRELLTQIGVPFTVLSAQIDETPFDHETPAAYVERLALGKAQAGLSVLPAEQQACVMGADTAVVLDGRILGKPVDEADALAMLMALSGREHQVLTAVALCDRQRSDTRIVTSRVRFRPIQIHEAQAYWTSGEPADKAGGYAIQGLAAIFVEGLQGSYSGVVGLPLCETAELLGHFGIPCWQCLEGDKS</sequence>
<protein>
    <recommendedName>
        <fullName evidence="1">dTTP/UTP pyrophosphatase</fullName>
        <shortName evidence="1">dTTPase/UTPase</shortName>
        <ecNumber evidence="1">3.6.1.9</ecNumber>
    </recommendedName>
    <alternativeName>
        <fullName evidence="1">Nucleoside triphosphate pyrophosphatase</fullName>
    </alternativeName>
    <alternativeName>
        <fullName evidence="1">Nucleotide pyrophosphatase</fullName>
        <shortName evidence="1">Nucleotide PPase</shortName>
    </alternativeName>
</protein>